<dbReference type="EC" id="3.6.1.23" evidence="1"/>
<dbReference type="EMBL" id="CP000350">
    <property type="protein sequence ID" value="ABJ76716.1"/>
    <property type="molecule type" value="Genomic_DNA"/>
</dbReference>
<dbReference type="RefSeq" id="WP_011670655.1">
    <property type="nucleotide sequence ID" value="NC_008510.1"/>
</dbReference>
<dbReference type="SMR" id="Q04QV4"/>
<dbReference type="KEGG" id="lbj:LBJ_2235"/>
<dbReference type="HOGENOM" id="CLU_068508_1_2_12"/>
<dbReference type="UniPathway" id="UPA00610">
    <property type="reaction ID" value="UER00666"/>
</dbReference>
<dbReference type="Proteomes" id="UP000000656">
    <property type="component" value="Chromosome 1"/>
</dbReference>
<dbReference type="GO" id="GO:0004170">
    <property type="term" value="F:dUTP diphosphatase activity"/>
    <property type="evidence" value="ECO:0007669"/>
    <property type="project" value="UniProtKB-UniRule"/>
</dbReference>
<dbReference type="GO" id="GO:0000287">
    <property type="term" value="F:magnesium ion binding"/>
    <property type="evidence" value="ECO:0007669"/>
    <property type="project" value="UniProtKB-UniRule"/>
</dbReference>
<dbReference type="GO" id="GO:0006226">
    <property type="term" value="P:dUMP biosynthetic process"/>
    <property type="evidence" value="ECO:0007669"/>
    <property type="project" value="UniProtKB-UniRule"/>
</dbReference>
<dbReference type="GO" id="GO:0046081">
    <property type="term" value="P:dUTP catabolic process"/>
    <property type="evidence" value="ECO:0007669"/>
    <property type="project" value="InterPro"/>
</dbReference>
<dbReference type="CDD" id="cd07557">
    <property type="entry name" value="trimeric_dUTPase"/>
    <property type="match status" value="1"/>
</dbReference>
<dbReference type="Gene3D" id="2.70.40.10">
    <property type="match status" value="1"/>
</dbReference>
<dbReference type="HAMAP" id="MF_00116">
    <property type="entry name" value="dUTPase_bact"/>
    <property type="match status" value="1"/>
</dbReference>
<dbReference type="InterPro" id="IPR008181">
    <property type="entry name" value="dUTPase"/>
</dbReference>
<dbReference type="InterPro" id="IPR029054">
    <property type="entry name" value="dUTPase-like"/>
</dbReference>
<dbReference type="InterPro" id="IPR036157">
    <property type="entry name" value="dUTPase-like_sf"/>
</dbReference>
<dbReference type="InterPro" id="IPR033704">
    <property type="entry name" value="dUTPase_trimeric"/>
</dbReference>
<dbReference type="NCBIfam" id="TIGR00576">
    <property type="entry name" value="dut"/>
    <property type="match status" value="1"/>
</dbReference>
<dbReference type="NCBIfam" id="NF001862">
    <property type="entry name" value="PRK00601.1"/>
    <property type="match status" value="1"/>
</dbReference>
<dbReference type="PANTHER" id="PTHR11241">
    <property type="entry name" value="DEOXYURIDINE 5'-TRIPHOSPHATE NUCLEOTIDOHYDROLASE"/>
    <property type="match status" value="1"/>
</dbReference>
<dbReference type="PANTHER" id="PTHR11241:SF0">
    <property type="entry name" value="DEOXYURIDINE 5'-TRIPHOSPHATE NUCLEOTIDOHYDROLASE"/>
    <property type="match status" value="1"/>
</dbReference>
<dbReference type="Pfam" id="PF00692">
    <property type="entry name" value="dUTPase"/>
    <property type="match status" value="1"/>
</dbReference>
<dbReference type="SUPFAM" id="SSF51283">
    <property type="entry name" value="dUTPase-like"/>
    <property type="match status" value="1"/>
</dbReference>
<protein>
    <recommendedName>
        <fullName evidence="1">Deoxyuridine 5'-triphosphate nucleotidohydrolase</fullName>
        <shortName evidence="1">dUTPase</shortName>
        <ecNumber evidence="1">3.6.1.23</ecNumber>
    </recommendedName>
    <alternativeName>
        <fullName evidence="1">dUTP pyrophosphatase</fullName>
    </alternativeName>
</protein>
<reference key="1">
    <citation type="journal article" date="2006" name="Proc. Natl. Acad. Sci. U.S.A.">
        <title>Genome reduction in Leptospira borgpetersenii reflects limited transmission potential.</title>
        <authorList>
            <person name="Bulach D.M."/>
            <person name="Zuerner R.L."/>
            <person name="Wilson P."/>
            <person name="Seemann T."/>
            <person name="McGrath A."/>
            <person name="Cullen P.A."/>
            <person name="Davis J."/>
            <person name="Johnson M."/>
            <person name="Kuczek E."/>
            <person name="Alt D.P."/>
            <person name="Peterson-Burch B."/>
            <person name="Coppel R.L."/>
            <person name="Rood J.I."/>
            <person name="Davies J.K."/>
            <person name="Adler B."/>
        </authorList>
    </citation>
    <scope>NUCLEOTIDE SEQUENCE [LARGE SCALE GENOMIC DNA]</scope>
    <source>
        <strain>JB197</strain>
    </source>
</reference>
<organism>
    <name type="scientific">Leptospira borgpetersenii serovar Hardjo-bovis (strain JB197)</name>
    <dbReference type="NCBI Taxonomy" id="355277"/>
    <lineage>
        <taxon>Bacteria</taxon>
        <taxon>Pseudomonadati</taxon>
        <taxon>Spirochaetota</taxon>
        <taxon>Spirochaetia</taxon>
        <taxon>Leptospirales</taxon>
        <taxon>Leptospiraceae</taxon>
        <taxon>Leptospira</taxon>
    </lineage>
</organism>
<evidence type="ECO:0000255" key="1">
    <source>
        <dbReference type="HAMAP-Rule" id="MF_00116"/>
    </source>
</evidence>
<gene>
    <name evidence="1" type="primary">dut</name>
    <name type="ordered locus">LBJ_2235</name>
</gene>
<comment type="function">
    <text evidence="1">This enzyme is involved in nucleotide metabolism: it produces dUMP, the immediate precursor of thymidine nucleotides and it decreases the intracellular concentration of dUTP so that uracil cannot be incorporated into DNA.</text>
</comment>
<comment type="catalytic activity">
    <reaction evidence="1">
        <text>dUTP + H2O = dUMP + diphosphate + H(+)</text>
        <dbReference type="Rhea" id="RHEA:10248"/>
        <dbReference type="ChEBI" id="CHEBI:15377"/>
        <dbReference type="ChEBI" id="CHEBI:15378"/>
        <dbReference type="ChEBI" id="CHEBI:33019"/>
        <dbReference type="ChEBI" id="CHEBI:61555"/>
        <dbReference type="ChEBI" id="CHEBI:246422"/>
        <dbReference type="EC" id="3.6.1.23"/>
    </reaction>
</comment>
<comment type="cofactor">
    <cofactor evidence="1">
        <name>Mg(2+)</name>
        <dbReference type="ChEBI" id="CHEBI:18420"/>
    </cofactor>
</comment>
<comment type="pathway">
    <text evidence="1">Pyrimidine metabolism; dUMP biosynthesis; dUMP from dCTP (dUTP route): step 2/2.</text>
</comment>
<comment type="similarity">
    <text evidence="1">Belongs to the dUTPase family.</text>
</comment>
<accession>Q04QV4</accession>
<name>DUT_LEPBJ</name>
<keyword id="KW-0378">Hydrolase</keyword>
<keyword id="KW-0460">Magnesium</keyword>
<keyword id="KW-0479">Metal-binding</keyword>
<keyword id="KW-0546">Nucleotide metabolism</keyword>
<feature type="chain" id="PRO_1000015479" description="Deoxyuridine 5'-triphosphate nucleotidohydrolase">
    <location>
        <begin position="1"/>
        <end position="145"/>
    </location>
</feature>
<feature type="binding site" evidence="1">
    <location>
        <begin position="64"/>
        <end position="66"/>
    </location>
    <ligand>
        <name>substrate</name>
    </ligand>
</feature>
<feature type="binding site" evidence="1">
    <location>
        <position position="77"/>
    </location>
    <ligand>
        <name>substrate</name>
    </ligand>
</feature>
<feature type="binding site" evidence="1">
    <location>
        <begin position="81"/>
        <end position="83"/>
    </location>
    <ligand>
        <name>substrate</name>
    </ligand>
</feature>
<feature type="binding site" evidence="1">
    <location>
        <position position="91"/>
    </location>
    <ligand>
        <name>substrate</name>
    </ligand>
</feature>
<sequence>MKIPIKKLRSNAELPVLQTKHAAGYDVHACLDSNLILEPNKVTLVPTGLSFEIPQEYHFEIRPRSGFSTKNQILIPNSPGTIDSDYRGELMIPLFNLGNIPFVIEHGMRIAQLLIRETHYTNWELVSEFTDTTERGTGGFGSTGH</sequence>
<proteinExistence type="inferred from homology"/>